<organism>
    <name type="scientific">Homo sapiens</name>
    <name type="common">Human</name>
    <dbReference type="NCBI Taxonomy" id="9606"/>
    <lineage>
        <taxon>Eukaryota</taxon>
        <taxon>Metazoa</taxon>
        <taxon>Chordata</taxon>
        <taxon>Craniata</taxon>
        <taxon>Vertebrata</taxon>
        <taxon>Euteleostomi</taxon>
        <taxon>Mammalia</taxon>
        <taxon>Eutheria</taxon>
        <taxon>Euarchontoglires</taxon>
        <taxon>Primates</taxon>
        <taxon>Haplorrhini</taxon>
        <taxon>Catarrhini</taxon>
        <taxon>Hominidae</taxon>
        <taxon>Homo</taxon>
    </lineage>
</organism>
<protein>
    <recommendedName>
        <fullName evidence="22">Ubiquilin-4</fullName>
    </recommendedName>
    <alternativeName>
        <fullName evidence="18">Ataxin-1 interacting ubiquitin-like protein</fullName>
        <shortName evidence="18">A1Up</shortName>
    </alternativeName>
    <alternativeName>
        <fullName>Ataxin-1 ubiquitin-like-interacting protein A1U</fullName>
    </alternativeName>
    <alternativeName>
        <fullName evidence="1">Connexin43-interacting protein of 75 kDa</fullName>
        <shortName evidence="1">CIP75</shortName>
    </alternativeName>
</protein>
<sequence length="601" mass="63853">MAEPSGAETRPPIRVTVKTPKDKEEIVICDRASVKEFKEEISRRFKAQQDQLVLIFAGKILKDGDTLNQHGIKDGLTVHLVIKTPQKAQDPAAATASSPSTPDPASAPSTTPASPATPAQPSTSGSASSDAGSGSRRSSGGGPSPGAGEGSPSATASILSGFGGILGLGSLGLGSANFMELQQQMQRQLMSNPEMLSQIMENPLVQDMMSNPDLMRHMIMANPQMQQLMERNPEISHMLNNPELMRQTMELARNPAMMQEMMRNQDRALSNLESIPGGYNALRRMYTDIQEPMFSAAREQFGNNPFSSLAGNSDSSSSQPLRTENREPLPNPWSPSPPTSQAPGSGGEGTGGSGTSQVHPTVSNPFGINAASLGSGMFNSPEMQALLQQISENPQLMQNVISAPYMRSMMQTLAQNPDFAAQMMVNVPLFAGNPQLQEQLRLQLPVFLQQMQNPESLSILTNPRAMQALLQIQQGLQTLQTEAPGLVPSLGSFGISRTPAPSAGSNAGSTPEAPTSSPATPATSSPTGASSAQQQLMQQMIQLLAGSGNSQVQTPEVRFQQQLEQLNSMGFINREANLQALIATGGDINAAIERLLGSQLS</sequence>
<reference key="1">
    <citation type="journal article" date="2000" name="Hum. Mol. Genet.">
        <title>Identification and characterization of an ataxin-1-interacting protein: A1Up, a ubiquitin-like nuclear protein.</title>
        <authorList>
            <person name="Davidson J.D."/>
            <person name="Riley B."/>
            <person name="Burright E.N."/>
            <person name="Duvick L.A."/>
            <person name="Zoghbi H.Y."/>
            <person name="Orr H.T."/>
        </authorList>
    </citation>
    <scope>NUCLEOTIDE SEQUENCE [MRNA] (ISOFORM 1)</scope>
    <scope>SUBCELLULAR LOCATION</scope>
    <scope>INTERACTION WITH ATXN1/SCA1</scope>
    <scope>TISSUE SPECIFICITY</scope>
    <source>
        <tissue>Brain</tissue>
    </source>
</reference>
<reference key="2">
    <citation type="journal article" date="2004" name="Nat. Genet.">
        <title>Complete sequencing and characterization of 21,243 full-length human cDNAs.</title>
        <authorList>
            <person name="Ota T."/>
            <person name="Suzuki Y."/>
            <person name="Nishikawa T."/>
            <person name="Otsuki T."/>
            <person name="Sugiyama T."/>
            <person name="Irie R."/>
            <person name="Wakamatsu A."/>
            <person name="Hayashi K."/>
            <person name="Sato H."/>
            <person name="Nagai K."/>
            <person name="Kimura K."/>
            <person name="Makita H."/>
            <person name="Sekine M."/>
            <person name="Obayashi M."/>
            <person name="Nishi T."/>
            <person name="Shibahara T."/>
            <person name="Tanaka T."/>
            <person name="Ishii S."/>
            <person name="Yamamoto J."/>
            <person name="Saito K."/>
            <person name="Kawai Y."/>
            <person name="Isono Y."/>
            <person name="Nakamura Y."/>
            <person name="Nagahari K."/>
            <person name="Murakami K."/>
            <person name="Yasuda T."/>
            <person name="Iwayanagi T."/>
            <person name="Wagatsuma M."/>
            <person name="Shiratori A."/>
            <person name="Sudo H."/>
            <person name="Hosoiri T."/>
            <person name="Kaku Y."/>
            <person name="Kodaira H."/>
            <person name="Kondo H."/>
            <person name="Sugawara M."/>
            <person name="Takahashi M."/>
            <person name="Kanda K."/>
            <person name="Yokoi T."/>
            <person name="Furuya T."/>
            <person name="Kikkawa E."/>
            <person name="Omura Y."/>
            <person name="Abe K."/>
            <person name="Kamihara K."/>
            <person name="Katsuta N."/>
            <person name="Sato K."/>
            <person name="Tanikawa M."/>
            <person name="Yamazaki M."/>
            <person name="Ninomiya K."/>
            <person name="Ishibashi T."/>
            <person name="Yamashita H."/>
            <person name="Murakawa K."/>
            <person name="Fujimori K."/>
            <person name="Tanai H."/>
            <person name="Kimata M."/>
            <person name="Watanabe M."/>
            <person name="Hiraoka S."/>
            <person name="Chiba Y."/>
            <person name="Ishida S."/>
            <person name="Ono Y."/>
            <person name="Takiguchi S."/>
            <person name="Watanabe S."/>
            <person name="Yosida M."/>
            <person name="Hotuta T."/>
            <person name="Kusano J."/>
            <person name="Kanehori K."/>
            <person name="Takahashi-Fujii A."/>
            <person name="Hara H."/>
            <person name="Tanase T.-O."/>
            <person name="Nomura Y."/>
            <person name="Togiya S."/>
            <person name="Komai F."/>
            <person name="Hara R."/>
            <person name="Takeuchi K."/>
            <person name="Arita M."/>
            <person name="Imose N."/>
            <person name="Musashino K."/>
            <person name="Yuuki H."/>
            <person name="Oshima A."/>
            <person name="Sasaki N."/>
            <person name="Aotsuka S."/>
            <person name="Yoshikawa Y."/>
            <person name="Matsunawa H."/>
            <person name="Ichihara T."/>
            <person name="Shiohata N."/>
            <person name="Sano S."/>
            <person name="Moriya S."/>
            <person name="Momiyama H."/>
            <person name="Satoh N."/>
            <person name="Takami S."/>
            <person name="Terashima Y."/>
            <person name="Suzuki O."/>
            <person name="Nakagawa S."/>
            <person name="Senoh A."/>
            <person name="Mizoguchi H."/>
            <person name="Goto Y."/>
            <person name="Shimizu F."/>
            <person name="Wakebe H."/>
            <person name="Hishigaki H."/>
            <person name="Watanabe T."/>
            <person name="Sugiyama A."/>
            <person name="Takemoto M."/>
            <person name="Kawakami B."/>
            <person name="Yamazaki M."/>
            <person name="Watanabe K."/>
            <person name="Kumagai A."/>
            <person name="Itakura S."/>
            <person name="Fukuzumi Y."/>
            <person name="Fujimori Y."/>
            <person name="Komiyama M."/>
            <person name="Tashiro H."/>
            <person name="Tanigami A."/>
            <person name="Fujiwara T."/>
            <person name="Ono T."/>
            <person name="Yamada K."/>
            <person name="Fujii Y."/>
            <person name="Ozaki K."/>
            <person name="Hirao M."/>
            <person name="Ohmori Y."/>
            <person name="Kawabata A."/>
            <person name="Hikiji T."/>
            <person name="Kobatake N."/>
            <person name="Inagaki H."/>
            <person name="Ikema Y."/>
            <person name="Okamoto S."/>
            <person name="Okitani R."/>
            <person name="Kawakami T."/>
            <person name="Noguchi S."/>
            <person name="Itoh T."/>
            <person name="Shigeta K."/>
            <person name="Senba T."/>
            <person name="Matsumura K."/>
            <person name="Nakajima Y."/>
            <person name="Mizuno T."/>
            <person name="Morinaga M."/>
            <person name="Sasaki M."/>
            <person name="Togashi T."/>
            <person name="Oyama M."/>
            <person name="Hata H."/>
            <person name="Watanabe M."/>
            <person name="Komatsu T."/>
            <person name="Mizushima-Sugano J."/>
            <person name="Satoh T."/>
            <person name="Shirai Y."/>
            <person name="Takahashi Y."/>
            <person name="Nakagawa K."/>
            <person name="Okumura K."/>
            <person name="Nagase T."/>
            <person name="Nomura N."/>
            <person name="Kikuchi H."/>
            <person name="Masuho Y."/>
            <person name="Yamashita R."/>
            <person name="Nakai K."/>
            <person name="Yada T."/>
            <person name="Nakamura Y."/>
            <person name="Ohara O."/>
            <person name="Isogai T."/>
            <person name="Sugano S."/>
        </authorList>
    </citation>
    <scope>NUCLEOTIDE SEQUENCE [LARGE SCALE MRNA] (ISOFORMS 1 AND 2)</scope>
    <scope>VARIANT MET-495</scope>
    <source>
        <tissue>Brain</tissue>
    </source>
</reference>
<reference key="3">
    <citation type="journal article" date="2006" name="Nature">
        <title>The DNA sequence and biological annotation of human chromosome 1.</title>
        <authorList>
            <person name="Gregory S.G."/>
            <person name="Barlow K.F."/>
            <person name="McLay K.E."/>
            <person name="Kaul R."/>
            <person name="Swarbreck D."/>
            <person name="Dunham A."/>
            <person name="Scott C.E."/>
            <person name="Howe K.L."/>
            <person name="Woodfine K."/>
            <person name="Spencer C.C.A."/>
            <person name="Jones M.C."/>
            <person name="Gillson C."/>
            <person name="Searle S."/>
            <person name="Zhou Y."/>
            <person name="Kokocinski F."/>
            <person name="McDonald L."/>
            <person name="Evans R."/>
            <person name="Phillips K."/>
            <person name="Atkinson A."/>
            <person name="Cooper R."/>
            <person name="Jones C."/>
            <person name="Hall R.E."/>
            <person name="Andrews T.D."/>
            <person name="Lloyd C."/>
            <person name="Ainscough R."/>
            <person name="Almeida J.P."/>
            <person name="Ambrose K.D."/>
            <person name="Anderson F."/>
            <person name="Andrew R.W."/>
            <person name="Ashwell R.I.S."/>
            <person name="Aubin K."/>
            <person name="Babbage A.K."/>
            <person name="Bagguley C.L."/>
            <person name="Bailey J."/>
            <person name="Beasley H."/>
            <person name="Bethel G."/>
            <person name="Bird C.P."/>
            <person name="Bray-Allen S."/>
            <person name="Brown J.Y."/>
            <person name="Brown A.J."/>
            <person name="Buckley D."/>
            <person name="Burton J."/>
            <person name="Bye J."/>
            <person name="Carder C."/>
            <person name="Chapman J.C."/>
            <person name="Clark S.Y."/>
            <person name="Clarke G."/>
            <person name="Clee C."/>
            <person name="Cobley V."/>
            <person name="Collier R.E."/>
            <person name="Corby N."/>
            <person name="Coville G.J."/>
            <person name="Davies J."/>
            <person name="Deadman R."/>
            <person name="Dunn M."/>
            <person name="Earthrowl M."/>
            <person name="Ellington A.G."/>
            <person name="Errington H."/>
            <person name="Frankish A."/>
            <person name="Frankland J."/>
            <person name="French L."/>
            <person name="Garner P."/>
            <person name="Garnett J."/>
            <person name="Gay L."/>
            <person name="Ghori M.R.J."/>
            <person name="Gibson R."/>
            <person name="Gilby L.M."/>
            <person name="Gillett W."/>
            <person name="Glithero R.J."/>
            <person name="Grafham D.V."/>
            <person name="Griffiths C."/>
            <person name="Griffiths-Jones S."/>
            <person name="Grocock R."/>
            <person name="Hammond S."/>
            <person name="Harrison E.S.I."/>
            <person name="Hart E."/>
            <person name="Haugen E."/>
            <person name="Heath P.D."/>
            <person name="Holmes S."/>
            <person name="Holt K."/>
            <person name="Howden P.J."/>
            <person name="Hunt A.R."/>
            <person name="Hunt S.E."/>
            <person name="Hunter G."/>
            <person name="Isherwood J."/>
            <person name="James R."/>
            <person name="Johnson C."/>
            <person name="Johnson D."/>
            <person name="Joy A."/>
            <person name="Kay M."/>
            <person name="Kershaw J.K."/>
            <person name="Kibukawa M."/>
            <person name="Kimberley A.M."/>
            <person name="King A."/>
            <person name="Knights A.J."/>
            <person name="Lad H."/>
            <person name="Laird G."/>
            <person name="Lawlor S."/>
            <person name="Leongamornlert D.A."/>
            <person name="Lloyd D.M."/>
            <person name="Loveland J."/>
            <person name="Lovell J."/>
            <person name="Lush M.J."/>
            <person name="Lyne R."/>
            <person name="Martin S."/>
            <person name="Mashreghi-Mohammadi M."/>
            <person name="Matthews L."/>
            <person name="Matthews N.S.W."/>
            <person name="McLaren S."/>
            <person name="Milne S."/>
            <person name="Mistry S."/>
            <person name="Moore M.J.F."/>
            <person name="Nickerson T."/>
            <person name="O'Dell C.N."/>
            <person name="Oliver K."/>
            <person name="Palmeiri A."/>
            <person name="Palmer S.A."/>
            <person name="Parker A."/>
            <person name="Patel D."/>
            <person name="Pearce A.V."/>
            <person name="Peck A.I."/>
            <person name="Pelan S."/>
            <person name="Phelps K."/>
            <person name="Phillimore B.J."/>
            <person name="Plumb R."/>
            <person name="Rajan J."/>
            <person name="Raymond C."/>
            <person name="Rouse G."/>
            <person name="Saenphimmachak C."/>
            <person name="Sehra H.K."/>
            <person name="Sheridan E."/>
            <person name="Shownkeen R."/>
            <person name="Sims S."/>
            <person name="Skuce C.D."/>
            <person name="Smith M."/>
            <person name="Steward C."/>
            <person name="Subramanian S."/>
            <person name="Sycamore N."/>
            <person name="Tracey A."/>
            <person name="Tromans A."/>
            <person name="Van Helmond Z."/>
            <person name="Wall M."/>
            <person name="Wallis J.M."/>
            <person name="White S."/>
            <person name="Whitehead S.L."/>
            <person name="Wilkinson J.E."/>
            <person name="Willey D.L."/>
            <person name="Williams H."/>
            <person name="Wilming L."/>
            <person name="Wray P.W."/>
            <person name="Wu Z."/>
            <person name="Coulson A."/>
            <person name="Vaudin M."/>
            <person name="Sulston J.E."/>
            <person name="Durbin R.M."/>
            <person name="Hubbard T."/>
            <person name="Wooster R."/>
            <person name="Dunham I."/>
            <person name="Carter N.P."/>
            <person name="McVean G."/>
            <person name="Ross M.T."/>
            <person name="Harrow J."/>
            <person name="Olson M.V."/>
            <person name="Beck S."/>
            <person name="Rogers J."/>
            <person name="Bentley D.R."/>
        </authorList>
    </citation>
    <scope>NUCLEOTIDE SEQUENCE [LARGE SCALE GENOMIC DNA]</scope>
</reference>
<reference key="4">
    <citation type="journal article" date="2004" name="Genome Res.">
        <title>The status, quality, and expansion of the NIH full-length cDNA project: the Mammalian Gene Collection (MGC).</title>
        <authorList>
            <consortium name="The MGC Project Team"/>
        </authorList>
    </citation>
    <scope>NUCLEOTIDE SEQUENCE [LARGE SCALE MRNA] (ISOFORM 1)</scope>
    <source>
        <tissue>Brain</tissue>
        <tissue>Colon</tissue>
        <tissue>PNS</tissue>
    </source>
</reference>
<reference key="5">
    <citation type="journal article" date="1999" name="Cytogenet. Cell Genet.">
        <title>Identification of two paralogous regions mapping to the short and long arms of human chromosome 2 comprising LIS1 pseudogenes.</title>
        <authorList>
            <person name="Fogli A."/>
            <person name="Giglio S."/>
            <person name="Lo Nigro C."/>
            <person name="Zollo M."/>
            <person name="Viggiano L."/>
            <person name="Rocchi M."/>
            <person name="Archidiacono N."/>
            <person name="Zuffardi O."/>
            <person name="Carrozzo R."/>
        </authorList>
    </citation>
    <scope>NUCLEOTIDE SEQUENCE [MRNA] OF 161-601 (ISOFORM 1)</scope>
    <scope>VARIANT MET-495</scope>
</reference>
<reference key="6">
    <citation type="journal article" date="2004" name="J. Biol. Chem.">
        <title>The effects of the polyglutamine repeat protein ataxin-1 on the UbL-UBA protein A1Up.</title>
        <authorList>
            <person name="Riley B.E."/>
            <person name="Xu Y."/>
            <person name="Zoghbi H.Y."/>
            <person name="Orr H.T."/>
        </authorList>
    </citation>
    <scope>FUNCTION</scope>
    <scope>INTERACTION WITH UBIQUITIN; ATXN1 AND PSMD4</scope>
    <scope>SUBUNIT</scope>
    <scope>SUBCELLULAR LOCATION</scope>
    <scope>UBIQUITINATION</scope>
</reference>
<reference key="7">
    <citation type="journal article" date="2007" name="Science">
        <title>ATM and ATR substrate analysis reveals extensive protein networks responsive to DNA damage.</title>
        <authorList>
            <person name="Matsuoka S."/>
            <person name="Ballif B.A."/>
            <person name="Smogorzewska A."/>
            <person name="McDonald E.R. III"/>
            <person name="Hurov K.E."/>
            <person name="Luo J."/>
            <person name="Bakalarski C.E."/>
            <person name="Zhao Z."/>
            <person name="Solimini N."/>
            <person name="Lerenthal Y."/>
            <person name="Shiloh Y."/>
            <person name="Gygi S.P."/>
            <person name="Elledge S.J."/>
        </authorList>
    </citation>
    <scope>IDENTIFICATION BY MASS SPECTROMETRY [LARGE SCALE ANALYSIS]</scope>
    <source>
        <tissue>Embryonic kidney</tissue>
    </source>
</reference>
<reference key="8">
    <citation type="journal article" date="2008" name="Biochem. Biophys. Res. Commun.">
        <title>Herp enhances ER-associated protein degradation by recruiting ubiquilins.</title>
        <authorList>
            <person name="Kim T.Y."/>
            <person name="Kim E."/>
            <person name="Yoon S.K."/>
            <person name="Yoon J.B."/>
        </authorList>
    </citation>
    <scope>INTERACTION WITH HERPUD1</scope>
</reference>
<reference key="9">
    <citation type="journal article" date="2010" name="J. Gen. Virol.">
        <title>Mumps virus small hydrophobic protein targets ataxin-1 ubiquitin-like interacting protein (ubiquilin 4).</title>
        <authorList>
            <person name="Woznik M."/>
            <person name="Roedner C."/>
            <person name="Lemon K."/>
            <person name="Rima B."/>
            <person name="Mankertz A."/>
            <person name="Finsterbusch T."/>
        </authorList>
    </citation>
    <scope>INTERACTION WITH MUMPS VIRUS PROTEIN SH (MICROBIAL INFECTION)</scope>
</reference>
<reference key="10">
    <citation type="journal article" date="2010" name="Sci. Signal.">
        <title>Quantitative phosphoproteomics reveals widespread full phosphorylation site occupancy during mitosis.</title>
        <authorList>
            <person name="Olsen J.V."/>
            <person name="Vermeulen M."/>
            <person name="Santamaria A."/>
            <person name="Kumar C."/>
            <person name="Miller M.L."/>
            <person name="Jensen L.J."/>
            <person name="Gnad F."/>
            <person name="Cox J."/>
            <person name="Jensen T.S."/>
            <person name="Nigg E.A."/>
            <person name="Brunak S."/>
            <person name="Mann M."/>
        </authorList>
    </citation>
    <scope>PHOSPHORYLATION [LARGE SCALE ANALYSIS] AT SER-98</scope>
    <scope>IDENTIFICATION BY MASS SPECTROMETRY [LARGE SCALE ANALYSIS]</scope>
    <source>
        <tissue>Cervix carcinoma</tissue>
    </source>
</reference>
<reference key="11">
    <citation type="journal article" date="2011" name="BMC Syst. Biol.">
        <title>Initial characterization of the human central proteome.</title>
        <authorList>
            <person name="Burkard T.R."/>
            <person name="Planyavsky M."/>
            <person name="Kaupe I."/>
            <person name="Breitwieser F.P."/>
            <person name="Buerckstuemmer T."/>
            <person name="Bennett K.L."/>
            <person name="Superti-Furga G."/>
            <person name="Colinge J."/>
        </authorList>
    </citation>
    <scope>IDENTIFICATION BY MASS SPECTROMETRY [LARGE SCALE ANALYSIS]</scope>
</reference>
<reference key="12">
    <citation type="journal article" date="2013" name="EMBO Rep.">
        <title>Ubiquilin4 is an adaptor protein that recruits Ubiquilin1 to the autophagy machinery.</title>
        <authorList>
            <person name="Lee D.Y."/>
            <person name="Arnott D."/>
            <person name="Brown E.J."/>
        </authorList>
    </citation>
    <scope>IDENTIFICATION BY MASS SPECTROMETRY</scope>
    <scope>FUNCTION</scope>
    <scope>SUBCELLULAR LOCATION</scope>
    <scope>INTERACTION WITH UBQLN1; UBQLN2 AND MAP1LC3A/B/C</scope>
    <scope>MUTAGENESIS OF ILE-55</scope>
</reference>
<reference key="13">
    <citation type="journal article" date="2013" name="J. Proteome Res.">
        <title>Toward a comprehensive characterization of a human cancer cell phosphoproteome.</title>
        <authorList>
            <person name="Zhou H."/>
            <person name="Di Palma S."/>
            <person name="Preisinger C."/>
            <person name="Peng M."/>
            <person name="Polat A.N."/>
            <person name="Heck A.J."/>
            <person name="Mohammed S."/>
        </authorList>
    </citation>
    <scope>PHOSPHORYLATION [LARGE SCALE ANALYSIS] AT THR-287</scope>
    <scope>IDENTIFICATION BY MASS SPECTROMETRY [LARGE SCALE ANALYSIS]</scope>
    <source>
        <tissue>Erythroleukemia</tissue>
    </source>
</reference>
<reference key="14">
    <citation type="journal article" date="2014" name="BMC Evol. Biol.">
        <title>The ubiquilin gene family: evolutionary patterns and functional insights.</title>
        <authorList>
            <person name="Marin I."/>
        </authorList>
    </citation>
    <scope>REVIEW</scope>
</reference>
<reference key="15">
    <citation type="journal article" date="2014" name="J. Proteomics">
        <title>An enzyme assisted RP-RPLC approach for in-depth analysis of human liver phosphoproteome.</title>
        <authorList>
            <person name="Bian Y."/>
            <person name="Song C."/>
            <person name="Cheng K."/>
            <person name="Dong M."/>
            <person name="Wang F."/>
            <person name="Huang J."/>
            <person name="Sun D."/>
            <person name="Wang L."/>
            <person name="Ye M."/>
            <person name="Zou H."/>
        </authorList>
    </citation>
    <scope>IDENTIFICATION BY MASS SPECTROMETRY [LARGE SCALE ANALYSIS]</scope>
    <source>
        <tissue>Liver</tissue>
    </source>
</reference>
<reference key="16">
    <citation type="journal article" date="2016" name="EMBO Rep.">
        <title>UBQLN4 recognizes mislocalized transmembrane domain proteins and targets these to proteasomal degradation.</title>
        <authorList>
            <person name="Suzuki R."/>
            <person name="Kawahara H."/>
        </authorList>
    </citation>
    <scope>FUNCTION</scope>
    <scope>INTERACTION WITH BAG6</scope>
</reference>
<reference key="17">
    <citation type="journal article" date="2017" name="Nat. Struct. Mol. Biol.">
        <title>Site-specific mapping of the human SUMO proteome reveals co-modification with phosphorylation.</title>
        <authorList>
            <person name="Hendriks I.A."/>
            <person name="Lyon D."/>
            <person name="Young C."/>
            <person name="Jensen L.J."/>
            <person name="Vertegaal A.C."/>
            <person name="Nielsen M.L."/>
        </authorList>
    </citation>
    <scope>SUMOYLATION [LARGE SCALE ANALYSIS] AT LYS-23 AND LYS-62</scope>
    <scope>IDENTIFICATION BY MASS SPECTROMETRY [LARGE SCALE ANALYSIS]</scope>
</reference>
<reference key="18">
    <citation type="journal article" date="2017" name="Elife">
        <title>A novel ALS-associated variant in UBQLN4 regulates motor axon morphogenesis.</title>
        <authorList>
            <person name="Edens B.M."/>
            <person name="Yan J."/>
            <person name="Miller N."/>
            <person name="Deng H.X."/>
            <person name="Siddique T."/>
            <person name="Ma Y.C."/>
        </authorList>
    </citation>
    <scope>INVOLVEMENT IN ALS</scope>
    <scope>VARIANT ALS ALA-90</scope>
    <scope>CHARACTERIZATION OF VARIANT ALS ALA-90</scope>
</reference>
<reference key="19">
    <citation type="journal article" date="2018" name="Proc. Natl. Acad. Sci. U.S.A.">
        <title>Nuclear export of ubiquitinated proteins via the UBIN-POST system.</title>
        <authorList>
            <person name="Hirayama S."/>
            <person name="Sugihara M."/>
            <person name="Morito D."/>
            <person name="Iemura S.I."/>
            <person name="Natsume T."/>
            <person name="Murata S."/>
            <person name="Nagata K."/>
        </authorList>
    </citation>
    <scope>FUNCTION</scope>
    <scope>SUBCELLULAR LOCATION</scope>
    <scope>INTERACTION WITH DESI1</scope>
</reference>
<reference key="20">
    <citation type="journal article" date="2019" name="Cell">
        <title>UBQLN4 represses homologous recombination and is overexpressed in aggressive tumors.</title>
        <authorList>
            <person name="Jachimowicz R.D."/>
            <person name="Beleggia F."/>
            <person name="Isensee J."/>
            <person name="Velpula B.B."/>
            <person name="Goergens J."/>
            <person name="Bustos M.A."/>
            <person name="Doll M.A."/>
            <person name="Shenoy A."/>
            <person name="Checa-Rodriguez C."/>
            <person name="Wiederstein J.L."/>
            <person name="Baranes-Bachar K."/>
            <person name="Bartenhagen C."/>
            <person name="Hertwig F."/>
            <person name="Teper N."/>
            <person name="Nishi T."/>
            <person name="Schmitt A."/>
            <person name="Distelmaier F."/>
            <person name="Luedecke H.J."/>
            <person name="Albrecht B."/>
            <person name="Krueger M."/>
            <person name="Schumacher B."/>
            <person name="Geiger T."/>
            <person name="Hoon D.S.B."/>
            <person name="Huertas P."/>
            <person name="Fischer M."/>
            <person name="Hucho T."/>
            <person name="Peifer M."/>
            <person name="Ziv Y."/>
            <person name="Reinhardt H.C."/>
            <person name="Wieczorek D."/>
            <person name="Shiloh Y."/>
        </authorList>
    </citation>
    <scope>FUNCTION</scope>
    <scope>SUBCELLULAR LOCATION</scope>
    <scope>INTERACTION WITH MRE11</scope>
    <scope>INDUCTION</scope>
    <scope>PHOSPHORYLATION AT SER-144 AND SER-318</scope>
    <scope>MUTAGENESIS OF SER-318</scope>
    <scope>INVOLVEMENT IN UBDS</scope>
    <scope>VARIANT UBDS 326-ARG--SER-601 DEL</scope>
</reference>
<reference key="21">
    <citation type="journal article" date="2021" name="Mol. Oncol.">
        <title>UBQLN4 is an ATM substrate that stabilizes the anti-apoptotic proteins BCL2A1 and BCL2L10 in mesothelioma.</title>
        <authorList>
            <person name="Liu F."/>
            <person name="Pan R."/>
            <person name="Ding H."/>
            <person name="Gu L."/>
            <person name="Yang Y."/>
            <person name="Li C."/>
            <person name="Xu Y."/>
            <person name="Hu R."/>
            <person name="Chen H."/>
            <person name="Zhang X."/>
            <person name="Nie Y."/>
        </authorList>
    </citation>
    <scope>INTERACTION WITH BCL2A1 AND BCL2L10</scope>
    <scope>SUBCELLULAR LOCATION</scope>
    <scope>PHOSPHORYLATION AT SER-318</scope>
    <scope>MUTAGENESIS OF SER-318</scope>
</reference>
<keyword id="KW-0025">Alternative splicing</keyword>
<keyword id="KW-0036">Amyotrophic lateral sclerosis</keyword>
<keyword id="KW-0072">Autophagy</keyword>
<keyword id="KW-0158">Chromosome</keyword>
<keyword id="KW-0963">Cytoplasm</keyword>
<keyword id="KW-0968">Cytoplasmic vesicle</keyword>
<keyword id="KW-0225">Disease variant</keyword>
<keyword id="KW-0227">DNA damage</keyword>
<keyword id="KW-0234">DNA repair</keyword>
<keyword id="KW-0256">Endoplasmic reticulum</keyword>
<keyword id="KW-1017">Isopeptide bond</keyword>
<keyword id="KW-0523">Neurodegeneration</keyword>
<keyword id="KW-0539">Nucleus</keyword>
<keyword id="KW-0597">Phosphoprotein</keyword>
<keyword id="KW-1267">Proteomics identification</keyword>
<keyword id="KW-1185">Reference proteome</keyword>
<keyword id="KW-0832">Ubl conjugation</keyword>
<evidence type="ECO:0000250" key="1">
    <source>
        <dbReference type="UniProtKB" id="Q99NB8"/>
    </source>
</evidence>
<evidence type="ECO:0000255" key="2"/>
<evidence type="ECO:0000255" key="3">
    <source>
        <dbReference type="PROSITE-ProRule" id="PRU00212"/>
    </source>
</evidence>
<evidence type="ECO:0000255" key="4">
    <source>
        <dbReference type="PROSITE-ProRule" id="PRU00214"/>
    </source>
</evidence>
<evidence type="ECO:0000256" key="5">
    <source>
        <dbReference type="SAM" id="MobiDB-lite"/>
    </source>
</evidence>
<evidence type="ECO:0000269" key="6">
    <source>
    </source>
</evidence>
<evidence type="ECO:0000269" key="7">
    <source>
    </source>
</evidence>
<evidence type="ECO:0000269" key="8">
    <source>
    </source>
</evidence>
<evidence type="ECO:0000269" key="9">
    <source>
    </source>
</evidence>
<evidence type="ECO:0000269" key="10">
    <source>
    </source>
</evidence>
<evidence type="ECO:0000269" key="11">
    <source>
    </source>
</evidence>
<evidence type="ECO:0000269" key="12">
    <source>
    </source>
</evidence>
<evidence type="ECO:0000269" key="13">
    <source>
    </source>
</evidence>
<evidence type="ECO:0000269" key="14">
    <source>
    </source>
</evidence>
<evidence type="ECO:0000269" key="15">
    <source>
    </source>
</evidence>
<evidence type="ECO:0000269" key="16">
    <source>
    </source>
</evidence>
<evidence type="ECO:0000269" key="17">
    <source>
    </source>
</evidence>
<evidence type="ECO:0000303" key="18">
    <source>
    </source>
</evidence>
<evidence type="ECO:0000303" key="19">
    <source>
    </source>
</evidence>
<evidence type="ECO:0000303" key="20">
    <source>
    </source>
</evidence>
<evidence type="ECO:0000303" key="21">
    <source>
    </source>
</evidence>
<evidence type="ECO:0000305" key="22"/>
<evidence type="ECO:0000312" key="23">
    <source>
        <dbReference type="HGNC" id="HGNC:1237"/>
    </source>
</evidence>
<evidence type="ECO:0007744" key="24">
    <source>
    </source>
</evidence>
<evidence type="ECO:0007744" key="25">
    <source>
    </source>
</evidence>
<evidence type="ECO:0007744" key="26">
    <source>
    </source>
</evidence>
<dbReference type="EMBL" id="AF188240">
    <property type="protein sequence ID" value="AAF80171.1"/>
    <property type="molecule type" value="mRNA"/>
</dbReference>
<dbReference type="EMBL" id="AK098368">
    <property type="status" value="NOT_ANNOTATED_CDS"/>
    <property type="molecule type" value="mRNA"/>
</dbReference>
<dbReference type="EMBL" id="AK314413">
    <property type="protein sequence ID" value="BAG37034.1"/>
    <property type="molecule type" value="mRNA"/>
</dbReference>
<dbReference type="EMBL" id="AL355388">
    <property type="status" value="NOT_ANNOTATED_CDS"/>
    <property type="molecule type" value="Genomic_DNA"/>
</dbReference>
<dbReference type="EMBL" id="BC006410">
    <property type="protein sequence ID" value="AAH06410.1"/>
    <property type="status" value="ALT_INIT"/>
    <property type="molecule type" value="mRNA"/>
</dbReference>
<dbReference type="EMBL" id="BC018403">
    <property type="protein sequence ID" value="AAH18403.1"/>
    <property type="molecule type" value="mRNA"/>
</dbReference>
<dbReference type="EMBL" id="BC063841">
    <property type="protein sequence ID" value="AAH63841.1"/>
    <property type="molecule type" value="mRNA"/>
</dbReference>
<dbReference type="EMBL" id="AF113544">
    <property type="protein sequence ID" value="AAF19084.1"/>
    <property type="status" value="ALT_INIT"/>
    <property type="molecule type" value="mRNA"/>
</dbReference>
<dbReference type="CCDS" id="CCDS1127.1">
    <molecule id="Q9NRR5-1"/>
</dbReference>
<dbReference type="RefSeq" id="NP_001291271.1">
    <property type="nucleotide sequence ID" value="NM_001304342.1"/>
</dbReference>
<dbReference type="RefSeq" id="NP_064516.2">
    <molecule id="Q9NRR5-1"/>
    <property type="nucleotide sequence ID" value="NM_020131.4"/>
</dbReference>
<dbReference type="BMRB" id="Q9NRR5"/>
<dbReference type="SASBDB" id="Q9NRR5"/>
<dbReference type="SMR" id="Q9NRR5"/>
<dbReference type="BioGRID" id="121223">
    <property type="interactions" value="269"/>
</dbReference>
<dbReference type="FunCoup" id="Q9NRR5">
    <property type="interactions" value="4148"/>
</dbReference>
<dbReference type="IntAct" id="Q9NRR5">
    <property type="interactions" value="185"/>
</dbReference>
<dbReference type="MINT" id="Q9NRR5"/>
<dbReference type="STRING" id="9606.ENSP00000357292"/>
<dbReference type="TCDB" id="8.A.52.1.1">
    <property type="family name" value="the ubiquitin-related protein degradation (upd) family"/>
</dbReference>
<dbReference type="GlyCosmos" id="Q9NRR5">
    <property type="glycosylation" value="2 sites, 2 glycans"/>
</dbReference>
<dbReference type="GlyGen" id="Q9NRR5">
    <property type="glycosylation" value="7 sites, 2 O-linked glycans (2 sites)"/>
</dbReference>
<dbReference type="iPTMnet" id="Q9NRR5"/>
<dbReference type="PhosphoSitePlus" id="Q9NRR5"/>
<dbReference type="BioMuta" id="UBQLN4"/>
<dbReference type="DMDM" id="45476982"/>
<dbReference type="jPOST" id="Q9NRR5"/>
<dbReference type="MassIVE" id="Q9NRR5"/>
<dbReference type="PaxDb" id="9606-ENSP00000357292"/>
<dbReference type="PeptideAtlas" id="Q9NRR5"/>
<dbReference type="ProteomicsDB" id="82412">
    <molecule id="Q9NRR5-1"/>
</dbReference>
<dbReference type="ProteomicsDB" id="82413">
    <molecule id="Q9NRR5-2"/>
</dbReference>
<dbReference type="Pumba" id="Q9NRR5"/>
<dbReference type="TopDownProteomics" id="Q9NRR5-2">
    <molecule id="Q9NRR5-2"/>
</dbReference>
<dbReference type="Antibodypedia" id="34204">
    <property type="antibodies" value="122 antibodies from 26 providers"/>
</dbReference>
<dbReference type="DNASU" id="56893"/>
<dbReference type="Ensembl" id="ENST00000368309.4">
    <molecule id="Q9NRR5-1"/>
    <property type="protein sequence ID" value="ENSP00000357292.3"/>
    <property type="gene ID" value="ENSG00000160803.8"/>
</dbReference>
<dbReference type="GeneID" id="56893"/>
<dbReference type="KEGG" id="hsa:56893"/>
<dbReference type="MANE-Select" id="ENST00000368309.4">
    <property type="protein sequence ID" value="ENSP00000357292.3"/>
    <property type="RefSeq nucleotide sequence ID" value="NM_020131.5"/>
    <property type="RefSeq protein sequence ID" value="NP_064516.2"/>
</dbReference>
<dbReference type="UCSC" id="uc001fna.4">
    <molecule id="Q9NRR5-1"/>
    <property type="organism name" value="human"/>
</dbReference>
<dbReference type="AGR" id="HGNC:1237"/>
<dbReference type="CTD" id="56893"/>
<dbReference type="DisGeNET" id="56893"/>
<dbReference type="GeneCards" id="UBQLN4"/>
<dbReference type="HGNC" id="HGNC:1237">
    <property type="gene designation" value="UBQLN4"/>
</dbReference>
<dbReference type="HPA" id="ENSG00000160803">
    <property type="expression patterns" value="Low tissue specificity"/>
</dbReference>
<dbReference type="MalaCards" id="UBQLN4"/>
<dbReference type="MIM" id="105400">
    <property type="type" value="phenotype"/>
</dbReference>
<dbReference type="MIM" id="605440">
    <property type="type" value="gene"/>
</dbReference>
<dbReference type="neXtProt" id="NX_Q9NRR5"/>
<dbReference type="OpenTargets" id="ENSG00000160803"/>
<dbReference type="PharmGKB" id="PA25619"/>
<dbReference type="VEuPathDB" id="HostDB:ENSG00000160803"/>
<dbReference type="eggNOG" id="KOG0010">
    <property type="taxonomic scope" value="Eukaryota"/>
</dbReference>
<dbReference type="GeneTree" id="ENSGT00940000155620"/>
<dbReference type="HOGENOM" id="CLU_024293_4_0_1"/>
<dbReference type="InParanoid" id="Q9NRR5"/>
<dbReference type="OMA" id="EVRFQTQ"/>
<dbReference type="OrthoDB" id="9450922at2759"/>
<dbReference type="PAN-GO" id="Q9NRR5">
    <property type="GO annotations" value="3 GO annotations based on evolutionary models"/>
</dbReference>
<dbReference type="PhylomeDB" id="Q9NRR5"/>
<dbReference type="TreeFam" id="TF314412"/>
<dbReference type="PathwayCommons" id="Q9NRR5"/>
<dbReference type="SignaLink" id="Q9NRR5"/>
<dbReference type="SIGNOR" id="Q9NRR5"/>
<dbReference type="BioGRID-ORCS" id="56893">
    <property type="hits" value="195 hits in 1125 CRISPR screens"/>
</dbReference>
<dbReference type="CD-CODE" id="EB3EADD3">
    <property type="entry name" value="Ubqln puncta"/>
</dbReference>
<dbReference type="ChiTaRS" id="UBQLN4">
    <property type="organism name" value="human"/>
</dbReference>
<dbReference type="GenomeRNAi" id="56893"/>
<dbReference type="Pharos" id="Q9NRR5">
    <property type="development level" value="Tbio"/>
</dbReference>
<dbReference type="PRO" id="PR:Q9NRR5"/>
<dbReference type="Proteomes" id="UP000005640">
    <property type="component" value="Chromosome 1"/>
</dbReference>
<dbReference type="RNAct" id="Q9NRR5">
    <property type="molecule type" value="protein"/>
</dbReference>
<dbReference type="Bgee" id="ENSG00000160803">
    <property type="expression patterns" value="Expressed in cortical plate and 172 other cell types or tissues"/>
</dbReference>
<dbReference type="GO" id="GO:0005776">
    <property type="term" value="C:autophagosome"/>
    <property type="evidence" value="ECO:0000314"/>
    <property type="project" value="UniProtKB"/>
</dbReference>
<dbReference type="GO" id="GO:0005737">
    <property type="term" value="C:cytoplasm"/>
    <property type="evidence" value="ECO:0000314"/>
    <property type="project" value="UniProtKB"/>
</dbReference>
<dbReference type="GO" id="GO:0031410">
    <property type="term" value="C:cytoplasmic vesicle"/>
    <property type="evidence" value="ECO:0007669"/>
    <property type="project" value="UniProtKB-KW"/>
</dbReference>
<dbReference type="GO" id="GO:0005829">
    <property type="term" value="C:cytosol"/>
    <property type="evidence" value="ECO:0000314"/>
    <property type="project" value="UniProtKB"/>
</dbReference>
<dbReference type="GO" id="GO:0005789">
    <property type="term" value="C:endoplasmic reticulum membrane"/>
    <property type="evidence" value="ECO:0000250"/>
    <property type="project" value="UniProtKB"/>
</dbReference>
<dbReference type="GO" id="GO:0005654">
    <property type="term" value="C:nucleoplasm"/>
    <property type="evidence" value="ECO:0000314"/>
    <property type="project" value="HPA"/>
</dbReference>
<dbReference type="GO" id="GO:0005634">
    <property type="term" value="C:nucleus"/>
    <property type="evidence" value="ECO:0000314"/>
    <property type="project" value="UniProtKB"/>
</dbReference>
<dbReference type="GO" id="GO:0048471">
    <property type="term" value="C:perinuclear region of cytoplasm"/>
    <property type="evidence" value="ECO:0007669"/>
    <property type="project" value="UniProtKB-SubCell"/>
</dbReference>
<dbReference type="GO" id="GO:0032991">
    <property type="term" value="C:protein-containing complex"/>
    <property type="evidence" value="ECO:0000314"/>
    <property type="project" value="UniProtKB"/>
</dbReference>
<dbReference type="GO" id="GO:0090734">
    <property type="term" value="C:site of DNA damage"/>
    <property type="evidence" value="ECO:0000314"/>
    <property type="project" value="UniProtKB"/>
</dbReference>
<dbReference type="GO" id="GO:0042802">
    <property type="term" value="F:identical protein binding"/>
    <property type="evidence" value="ECO:0000353"/>
    <property type="project" value="IntAct"/>
</dbReference>
<dbReference type="GO" id="GO:0036435">
    <property type="term" value="F:K48-linked polyubiquitin modification-dependent protein binding"/>
    <property type="evidence" value="ECO:0000314"/>
    <property type="project" value="UniProtKB"/>
</dbReference>
<dbReference type="GO" id="GO:0031593">
    <property type="term" value="F:polyubiquitin modification-dependent protein binding"/>
    <property type="evidence" value="ECO:0000314"/>
    <property type="project" value="UniProtKB"/>
</dbReference>
<dbReference type="GO" id="GO:0006914">
    <property type="term" value="P:autophagy"/>
    <property type="evidence" value="ECO:0007669"/>
    <property type="project" value="UniProtKB-KW"/>
</dbReference>
<dbReference type="GO" id="GO:0006974">
    <property type="term" value="P:DNA damage response"/>
    <property type="evidence" value="ECO:0000314"/>
    <property type="project" value="UniProtKB"/>
</dbReference>
<dbReference type="GO" id="GO:0006281">
    <property type="term" value="P:DNA repair"/>
    <property type="evidence" value="ECO:0007669"/>
    <property type="project" value="UniProtKB-KW"/>
</dbReference>
<dbReference type="GO" id="GO:1901097">
    <property type="term" value="P:negative regulation of autophagosome maturation"/>
    <property type="evidence" value="ECO:0000315"/>
    <property type="project" value="UniProtKB"/>
</dbReference>
<dbReference type="GO" id="GO:2000042">
    <property type="term" value="P:negative regulation of double-strand break repair via homologous recombination"/>
    <property type="evidence" value="ECO:0000314"/>
    <property type="project" value="UniProtKB"/>
</dbReference>
<dbReference type="GO" id="GO:0032434">
    <property type="term" value="P:regulation of proteasomal ubiquitin-dependent protein catabolic process"/>
    <property type="evidence" value="ECO:0000314"/>
    <property type="project" value="UniProtKB"/>
</dbReference>
<dbReference type="GO" id="GO:0006511">
    <property type="term" value="P:ubiquitin-dependent protein catabolic process"/>
    <property type="evidence" value="ECO:0000318"/>
    <property type="project" value="GO_Central"/>
</dbReference>
<dbReference type="CDD" id="cd14399">
    <property type="entry name" value="UBA_PLICs"/>
    <property type="match status" value="1"/>
</dbReference>
<dbReference type="CDD" id="cd01808">
    <property type="entry name" value="Ubl_PLICs"/>
    <property type="match status" value="1"/>
</dbReference>
<dbReference type="FunFam" id="1.10.260.100:FF:000001">
    <property type="entry name" value="Ubiquilin 1"/>
    <property type="match status" value="1"/>
</dbReference>
<dbReference type="FunFam" id="1.10.260.100:FF:000003">
    <property type="entry name" value="Ubiquilin 1"/>
    <property type="match status" value="1"/>
</dbReference>
<dbReference type="FunFam" id="1.10.8.10:FF:000007">
    <property type="entry name" value="Ubiquilin 1"/>
    <property type="match status" value="1"/>
</dbReference>
<dbReference type="FunFam" id="3.10.20.90:FF:000095">
    <property type="entry name" value="Ubiquilin 4"/>
    <property type="match status" value="1"/>
</dbReference>
<dbReference type="Gene3D" id="1.10.260.100">
    <property type="match status" value="2"/>
</dbReference>
<dbReference type="Gene3D" id="1.10.8.10">
    <property type="entry name" value="DNA helicase RuvA subunit, C-terminal domain"/>
    <property type="match status" value="1"/>
</dbReference>
<dbReference type="Gene3D" id="3.10.20.90">
    <property type="entry name" value="Phosphatidylinositol 3-kinase Catalytic Subunit, Chain A, domain 1"/>
    <property type="match status" value="1"/>
</dbReference>
<dbReference type="InterPro" id="IPR006636">
    <property type="entry name" value="STI1_HS-bd"/>
</dbReference>
<dbReference type="InterPro" id="IPR015940">
    <property type="entry name" value="UBA"/>
</dbReference>
<dbReference type="InterPro" id="IPR009060">
    <property type="entry name" value="UBA-like_sf"/>
</dbReference>
<dbReference type="InterPro" id="IPR015496">
    <property type="entry name" value="Ubiquilin"/>
</dbReference>
<dbReference type="InterPro" id="IPR000626">
    <property type="entry name" value="Ubiquitin-like_dom"/>
</dbReference>
<dbReference type="InterPro" id="IPR029071">
    <property type="entry name" value="Ubiquitin-like_domsf"/>
</dbReference>
<dbReference type="PANTHER" id="PTHR10677">
    <property type="entry name" value="UBIQUILIN"/>
    <property type="match status" value="1"/>
</dbReference>
<dbReference type="PANTHER" id="PTHR10677:SF21">
    <property type="entry name" value="UBIQUILIN-4"/>
    <property type="match status" value="1"/>
</dbReference>
<dbReference type="Pfam" id="PF00627">
    <property type="entry name" value="UBA"/>
    <property type="match status" value="1"/>
</dbReference>
<dbReference type="Pfam" id="PF00240">
    <property type="entry name" value="ubiquitin"/>
    <property type="match status" value="1"/>
</dbReference>
<dbReference type="Pfam" id="PF23195">
    <property type="entry name" value="UBQLN1"/>
    <property type="match status" value="1"/>
</dbReference>
<dbReference type="SMART" id="SM00727">
    <property type="entry name" value="STI1"/>
    <property type="match status" value="4"/>
</dbReference>
<dbReference type="SMART" id="SM00165">
    <property type="entry name" value="UBA"/>
    <property type="match status" value="1"/>
</dbReference>
<dbReference type="SMART" id="SM00213">
    <property type="entry name" value="UBQ"/>
    <property type="match status" value="1"/>
</dbReference>
<dbReference type="SUPFAM" id="SSF46934">
    <property type="entry name" value="UBA-like"/>
    <property type="match status" value="1"/>
</dbReference>
<dbReference type="SUPFAM" id="SSF54236">
    <property type="entry name" value="Ubiquitin-like"/>
    <property type="match status" value="1"/>
</dbReference>
<dbReference type="PROSITE" id="PS50030">
    <property type="entry name" value="UBA"/>
    <property type="match status" value="1"/>
</dbReference>
<dbReference type="PROSITE" id="PS50053">
    <property type="entry name" value="UBIQUITIN_2"/>
    <property type="match status" value="1"/>
</dbReference>
<comment type="function">
    <text evidence="1 9 12 13 15 16">Regulator of protein degradation that mediates the proteasomal targeting of misfolded, mislocalized or accumulated proteins (PubMed:15280365, PubMed:27113755, PubMed:29666234, PubMed:30612738). Acts by binding polyubiquitin chains of target proteins via its UBA domain and by interacting with subunits of the proteasome via its ubiquitin-like domain (PubMed:15280365, PubMed:27113755, PubMed:30612738). Key regulator of DNA repair that represses homologous recombination repair: in response to DNA damage, recruited to sites of DNA damage following phosphorylation by ATM and acts by binding and removing ubiquitinated MRE11 from damaged chromatin, leading to MRE11 degradation by the proteasome (PubMed:30612738). MRE11 degradation prevents homologous recombination repair, redirecting double-strand break repair toward non-homologous end joining (NHEJ) (PubMed:30612738). Specifically recognizes and binds mislocalized transmembrane-containing proteins and targets them to proteasomal degradation (PubMed:27113755). Collaborates with DESI1/POST in the export of ubiquitinated proteins from the nucleus to the cytoplasm (PubMed:29666234). Also plays a role in the regulation of the proteasomal degradation of non-ubiquitinated GJA1 (By similarity). Acts as an adapter protein that recruits UBQLN1 to the autophagy machinery (PubMed:23459205). Mediates the association of UBQLN1 with autophagosomes and the autophagy-related protein LC3 (MAP1LC3A/B/C) and may assist in the maturation of autophagosomes to autolysosomes by mediating autophagosome-lysosome fusion (PubMed:23459205).</text>
</comment>
<comment type="subunit">
    <text evidence="1 7 9 10 12 13 15 16 17">Homooligomer (PubMed:15280365, PubMed:30612738). Binds signal sequences of proteins that are targeted to the endoplasmic reticulum (By similarity). Interacts (via UBA domain) with GJA1 (not ubiquitinated) and with ubiquitin; both compete for the same binding site (By similarity). Interacts (via UBA domain) with ubiquitin and with polyubiquitin chains (By similarity). Interacts (via ubiquitin-like domain) with PSMD2 and PSMD4, regulatory subunits of the 26S proteasome (PubMed:15280365). Interacts with ATXN1/SCA1; interaction with ATXN1 inhibits polyubiquitination of UBQLN4 and interferes with PSMD4 binding (PubMed:11001934, PubMed:15280365). Interacts with HERPUD1 (PubMed:18307982). Interacts (via ubiquitin-like domain) with UBQLN1 (via UBA domain) (PubMed:23459205). Interacts with UBQLN2 (PubMed:23459205). Interacts (via STI1 1 and 2 domains) with MAP1LC3A/B/C (PubMed:23459205). Interacts with BAG6 (PubMed:27113755). Interacts with MRE11 (when ubiquitinated); interaction with ubiquitinated MRE11 leads to MRE11 removal from chromatin (PubMed:30612738). Interacts with DESI1/POST; leading to nuclear export (PubMed:29666234). Interacts with BCL2A1 and BCL2L10 (PubMed:34245648).</text>
</comment>
<comment type="subunit">
    <text evidence="11">(Microbial infection) Interacts with Mumps virus protein SH.</text>
</comment>
<comment type="interaction">
    <interactant intactId="EBI-711226">
        <id>Q9NRR5</id>
    </interactant>
    <interactant intactId="EBI-930964">
        <id>P54253</id>
        <label>ATXN1</label>
    </interactant>
    <organismsDiffer>false</organismsDiffer>
    <experiments>6</experiments>
</comment>
<comment type="interaction">
    <interactant intactId="EBI-711226">
        <id>Q9NRR5</id>
    </interactant>
    <interactant intactId="EBI-719873">
        <id>P26885</id>
        <label>FKBP2</label>
    </interactant>
    <organismsDiffer>false</organismsDiffer>
    <experiments>2</experiments>
</comment>
<comment type="interaction">
    <interactant intactId="EBI-711226">
        <id>Q9NRR5</id>
    </interactant>
    <interactant intactId="EBI-750892">
        <id>P48723</id>
        <label>HSPA13</label>
    </interactant>
    <organismsDiffer>false</organismsDiffer>
    <experiments>3</experiments>
</comment>
<comment type="interaction">
    <interactant intactId="EBI-711226">
        <id>Q9NRR5</id>
    </interactant>
    <interactant intactId="EBI-720768">
        <id>Q9H492</id>
        <label>MAP1LC3A</label>
    </interactant>
    <organismsDiffer>false</organismsDiffer>
    <experiments>3</experiments>
</comment>
<comment type="interaction">
    <interactant intactId="EBI-711226">
        <id>Q9NRR5</id>
    </interactant>
    <interactant intactId="EBI-740216">
        <id>P55198</id>
        <label>MLLT6</label>
    </interactant>
    <organismsDiffer>false</organismsDiffer>
    <experiments>2</experiments>
</comment>
<comment type="interaction">
    <interactant intactId="EBI-711226">
        <id>Q9NRR5</id>
    </interactant>
    <interactant intactId="EBI-350517">
        <id>Q9NR12</id>
        <label>PDLIM7</label>
    </interactant>
    <organismsDiffer>false</organismsDiffer>
    <experiments>2</experiments>
</comment>
<comment type="interaction">
    <interactant intactId="EBI-711226">
        <id>Q9NRR5</id>
    </interactant>
    <interactant intactId="EBI-746228">
        <id>Q9Y5P3</id>
        <label>RAI2</label>
    </interactant>
    <organismsDiffer>false</organismsDiffer>
    <experiments>3</experiments>
</comment>
<comment type="interaction">
    <interactant intactId="EBI-711226">
        <id>Q9NRR5</id>
    </interactant>
    <interactant intactId="EBI-742790">
        <id>Q13049</id>
        <label>TRIM32</label>
    </interactant>
    <organismsDiffer>false</organismsDiffer>
    <experiments>3</experiments>
</comment>
<comment type="interaction">
    <interactant intactId="EBI-711226">
        <id>Q9NRR5</id>
    </interactant>
    <interactant intactId="EBI-741480">
        <id>Q9UMX0</id>
        <label>UBQLN1</label>
    </interactant>
    <organismsDiffer>false</organismsDiffer>
    <experiments>8</experiments>
</comment>
<comment type="interaction">
    <interactant intactId="EBI-711226">
        <id>Q9NRR5</id>
    </interactant>
    <interactant intactId="EBI-711226">
        <id>Q9NRR5</id>
        <label>UBQLN4</label>
    </interactant>
    <organismsDiffer>false</organismsDiffer>
    <experiments>3</experiments>
</comment>
<comment type="interaction">
    <interactant intactId="EBI-711226">
        <id>Q9NRR5</id>
    </interactant>
    <interactant intactId="EBI-747343">
        <id>O95201</id>
        <label>ZNF205</label>
    </interactant>
    <organismsDiffer>false</organismsDiffer>
    <experiments>2</experiments>
</comment>
<comment type="interaction">
    <interactant intactId="EBI-711226">
        <id>Q9NRR5</id>
    </interactant>
    <interactant intactId="EBI-476947">
        <id>P08050</id>
        <label>Gja1</label>
    </interactant>
    <organismsDiffer>true</organismsDiffer>
    <experiments>2</experiments>
</comment>
<comment type="subcellular location">
    <subcellularLocation>
        <location evidence="7 9 15 16 17">Nucleus</location>
    </subcellularLocation>
    <subcellularLocation>
        <location evidence="15 16 17">Cytoplasm</location>
    </subcellularLocation>
    <subcellularLocation>
        <location evidence="16">Chromosome</location>
    </subcellularLocation>
    <subcellularLocation>
        <location evidence="1">Endoplasmic reticulum</location>
    </subcellularLocation>
    <subcellularLocation>
        <location evidence="1">Cytoplasm</location>
        <location evidence="1">Perinuclear region</location>
    </subcellularLocation>
    <subcellularLocation>
        <location evidence="12">Cytoplasmic vesicle</location>
        <location evidence="12">Autophagosome</location>
    </subcellularLocation>
    <text evidence="9 15 16">Colocalizes with the proteasome, both in nucleus and cytoplasm (PubMed:15280365). Exported from the nucleus following interaction with DESI1/POST (PubMed:29666234). In response to DNA damage and phosphorylation at Ser-318 by ATM, localizes to the nucleus and is recruited to sites of DNA damage (PubMed:30612738).</text>
</comment>
<comment type="alternative products">
    <event type="alternative splicing"/>
    <isoform>
        <id>Q9NRR5-1</id>
        <name>1</name>
        <sequence type="displayed"/>
    </isoform>
    <isoform>
        <id>Q9NRR5-2</id>
        <name>2</name>
        <sequence type="described" ref="VSP_041187 VSP_041188"/>
    </isoform>
</comment>
<comment type="tissue specificity">
    <text evidence="7">Highly expressed in pancreas, kidney, skeletal muscle, heart and throughout the brain, and at lower levels in placenta, lung and liver.</text>
</comment>
<comment type="induction">
    <text evidence="16">Up-regulated in aggressive tumors: expression is significantly increased in stage 3 and 4 neuroblastomas, compared to stage 1 disease.</text>
</comment>
<comment type="PTM">
    <text evidence="16 17">Phosphorylated by ATM at Ser-318 in response to DNA damage, leading to localization in the nucleus and recruitment to sites of DNA damage.</text>
</comment>
<comment type="PTM">
    <text evidence="9">Ubiquitinated; this does not lead to proteasomal degradation (PubMed:15280365). May undergo both 'Lys-48'- and 'Lys-63'-linked polyubiquitination (PubMed:15280365).</text>
</comment>
<comment type="disease" evidence="14">
    <disease id="DI-00107">
        <name>Amyotrophic lateral sclerosis</name>
        <acronym>ALS</acronym>
        <description>A neurodegenerative disorder affecting upper motor neurons in the brain and lower motor neurons in the brain stem and spinal cord, resulting in fatal paralysis. Sensory abnormalities are absent. The pathologic hallmarks of the disease include pallor of the corticospinal tract due to loss of motor neurons, presence of ubiquitin-positive inclusions within surviving motor neurons, and deposition of pathologic aggregates. The etiology of amyotrophic lateral sclerosis is likely to be multifactorial, involving both genetic and environmental factors. The disease is inherited in 5-10% of the cases.</description>
        <dbReference type="MIM" id="105400"/>
    </disease>
    <text>Disease susceptibility is associated with variants affecting the gene represented in this entry.</text>
</comment>
<comment type="disease">
    <text evidence="16">Defects in UBQLN4 are the cause of the UBQLN4 deficiency syndrome (UBDS) (PubMed:30612738). Patients display intellectual impairment, growth retardation, microcephaly, facial dysmorphism, hearing loss, ataxia and anemia (PubMed:30612738). Cells display genomic instability characterized by hypersensitivity to genotoxic agents, leading to enhanced apoptotic cell death in response to DNA damage (PubMed:30612738).</text>
</comment>
<comment type="miscellaneous">
    <text evidence="17">May be a potential prognostic marker in cancer patients.</text>
</comment>
<comment type="sequence caution" evidence="22">
    <conflict type="erroneous initiation">
        <sequence resource="EMBL-CDS" id="AAF19084"/>
    </conflict>
    <text>Extended N-terminus.</text>
</comment>
<comment type="sequence caution" evidence="22">
    <conflict type="erroneous initiation">
        <sequence resource="EMBL-CDS" id="AAH06410"/>
    </conflict>
    <text>Truncated N-terminus.</text>
</comment>
<name>UBQL4_HUMAN</name>
<gene>
    <name evidence="20 23" type="primary">UBQLN4</name>
    <name evidence="23" type="synonym">C1orf6</name>
    <name evidence="1" type="synonym">CIP75</name>
    <name evidence="21" type="synonym">UBIN</name>
</gene>
<feature type="chain" id="PRO_0000211015" description="Ubiquilin-4">
    <location>
        <begin position="1"/>
        <end position="601"/>
    </location>
</feature>
<feature type="domain" description="Ubiquitin-like" evidence="4">
    <location>
        <begin position="13"/>
        <end position="87"/>
    </location>
</feature>
<feature type="domain" description="STI1 1" evidence="2">
    <location>
        <begin position="192"/>
        <end position="229"/>
    </location>
</feature>
<feature type="domain" description="STI1 2" evidence="2">
    <location>
        <begin position="230"/>
        <end position="261"/>
    </location>
</feature>
<feature type="domain" description="STI1 3" evidence="2">
    <location>
        <begin position="393"/>
        <end position="440"/>
    </location>
</feature>
<feature type="domain" description="STI1 4" evidence="2">
    <location>
        <begin position="444"/>
        <end position="476"/>
    </location>
</feature>
<feature type="domain" description="UBA" evidence="3">
    <location>
        <begin position="553"/>
        <end position="598"/>
    </location>
</feature>
<feature type="region of interest" description="Disordered" evidence="5">
    <location>
        <begin position="87"/>
        <end position="155"/>
    </location>
</feature>
<feature type="region of interest" description="Disordered" evidence="5">
    <location>
        <begin position="301"/>
        <end position="366"/>
    </location>
</feature>
<feature type="region of interest" description="Disordered" evidence="5">
    <location>
        <begin position="490"/>
        <end position="533"/>
    </location>
</feature>
<feature type="compositionally biased region" description="Low complexity" evidence="5">
    <location>
        <begin position="88"/>
        <end position="138"/>
    </location>
</feature>
<feature type="compositionally biased region" description="Gly residues" evidence="5">
    <location>
        <begin position="139"/>
        <end position="149"/>
    </location>
</feature>
<feature type="compositionally biased region" description="Low complexity" evidence="5">
    <location>
        <begin position="307"/>
        <end position="318"/>
    </location>
</feature>
<feature type="compositionally biased region" description="Pro residues" evidence="5">
    <location>
        <begin position="329"/>
        <end position="340"/>
    </location>
</feature>
<feature type="compositionally biased region" description="Gly residues" evidence="5">
    <location>
        <begin position="344"/>
        <end position="354"/>
    </location>
</feature>
<feature type="compositionally biased region" description="Polar residues" evidence="5">
    <location>
        <begin position="357"/>
        <end position="366"/>
    </location>
</feature>
<feature type="compositionally biased region" description="Low complexity" evidence="5">
    <location>
        <begin position="507"/>
        <end position="533"/>
    </location>
</feature>
<feature type="modified residue" description="Phosphoserine" evidence="24">
    <location>
        <position position="98"/>
    </location>
</feature>
<feature type="modified residue" description="Phosphoserine" evidence="16">
    <location>
        <position position="144"/>
    </location>
</feature>
<feature type="modified residue" description="Phosphothreonine" evidence="25">
    <location>
        <position position="287"/>
    </location>
</feature>
<feature type="modified residue" description="Phosphoserine; by ATM" evidence="16 17">
    <location>
        <position position="318"/>
    </location>
</feature>
<feature type="cross-link" description="Glycyl lysine isopeptide (Lys-Gly) (interchain with G-Cter in SUMO2)" evidence="26">
    <location>
        <position position="23"/>
    </location>
</feature>
<feature type="cross-link" description="Glycyl lysine isopeptide (Lys-Gly) (interchain with G-Cter in SUMO2)" evidence="26">
    <location>
        <position position="62"/>
    </location>
</feature>
<feature type="splice variant" id="VSP_041187" description="In isoform 2." evidence="19">
    <original>AATASSPSTPDPASAPSTTPASPATPAQPSTSGSASSDAGSGSRRSSGGGPSPGAGEGSPSATASILSGFGGILGLGSLGLGSANFMELQQQMQRQLMSNPEMLSQIMENPLVQDMMSNPDLMRHMIMANPQMQ</original>
    <variation>PPAAPSLPAADAEPRVTLHPYQSPSHAGIAADPAGTTDLADRGPWAGTQPWLLWDIPDPSTLSRQQRRVYARGPHFLTSHASHIFSNRGFQRPAATHAADDPAFGWKWKLTGADARSEISAAAGAAQLHGLHQS</variation>
    <location>
        <begin position="93"/>
        <end position="226"/>
    </location>
</feature>
<feature type="splice variant" id="VSP_041188" description="In isoform 2." evidence="19">
    <location>
        <begin position="227"/>
        <end position="601"/>
    </location>
</feature>
<feature type="sequence variant" id="VAR_081427" description="In ALS; impaired proteasome efficiency leading to accumulation of CTNNB1; dbSNP:rs1465567777." evidence="14">
    <original>D</original>
    <variation>A</variation>
    <location>
        <position position="90"/>
    </location>
</feature>
<feature type="sequence variant" id="VAR_081428" description="Found in patients with UBQLN4 deficiency syndrome (UBDS); likely pathogenic." evidence="16">
    <location>
        <begin position="326"/>
        <end position="601"/>
    </location>
</feature>
<feature type="sequence variant" id="VAR_052685" description="In dbSNP:rs2297792." evidence="6 8">
    <original>I</original>
    <variation>M</variation>
    <location>
        <position position="495"/>
    </location>
</feature>
<feature type="mutagenesis site" description="Loss of interaction with UBQLN1.">
    <original>I</original>
    <variation>A</variation>
    <location>
        <position position="55"/>
    </location>
</feature>
<feature type="mutagenesis site" description="Abolishes phosphorylation by ATM in response to DNA damage and impaired ability to regulate DNA repair." evidence="16 17">
    <original>S</original>
    <variation>A</variation>
    <location>
        <position position="318"/>
    </location>
</feature>
<feature type="sequence conflict" description="In Ref. 1; AAF80171." evidence="22" ref="1">
    <original>QL</original>
    <variation>HV</variation>
    <location>
        <begin position="188"/>
        <end position="189"/>
    </location>
</feature>
<feature type="sequence conflict" description="In Ref. 1; AAF80171." evidence="22" ref="1">
    <original>R</original>
    <variation>Q</variation>
    <location>
        <position position="298"/>
    </location>
</feature>
<proteinExistence type="evidence at protein level"/>
<accession>Q9NRR5</accession>
<accession>A6ND44</accession>
<accession>B2RAY7</accession>
<accession>Q5VYA0</accession>
<accession>Q5VYA1</accession>
<accession>Q9BR98</accession>
<accession>Q9UHX4</accession>